<comment type="function">
    <text evidence="2">Conversion of NADPH, generated by peripheral catabolic pathways, to NADH, which can enter the respiratory chain for energy generation.</text>
</comment>
<comment type="catalytic activity">
    <reaction evidence="2">
        <text>NAD(+) + NADPH = NADH + NADP(+)</text>
        <dbReference type="Rhea" id="RHEA:11692"/>
        <dbReference type="ChEBI" id="CHEBI:57540"/>
        <dbReference type="ChEBI" id="CHEBI:57783"/>
        <dbReference type="ChEBI" id="CHEBI:57945"/>
        <dbReference type="ChEBI" id="CHEBI:58349"/>
        <dbReference type="EC" id="1.6.1.1"/>
    </reaction>
</comment>
<comment type="cofactor">
    <cofactor evidence="2">
        <name>FAD</name>
        <dbReference type="ChEBI" id="CHEBI:57692"/>
    </cofactor>
    <text evidence="2">Binds 1 FAD per subunit.</text>
</comment>
<comment type="subcellular location">
    <subcellularLocation>
        <location evidence="2">Cytoplasm</location>
    </subcellularLocation>
</comment>
<comment type="similarity">
    <text evidence="2">Belongs to the class-I pyridine nucleotide-disulfide oxidoreductase family.</text>
</comment>
<feature type="initiator methionine" description="Removed" evidence="1">
    <location>
        <position position="1"/>
    </location>
</feature>
<feature type="chain" id="PRO_0000068071" description="Soluble pyridine nucleotide transhydrogenase">
    <location>
        <begin position="2"/>
        <end position="464"/>
    </location>
</feature>
<feature type="binding site" evidence="2">
    <location>
        <begin position="35"/>
        <end position="44"/>
    </location>
    <ligand>
        <name>FAD</name>
        <dbReference type="ChEBI" id="CHEBI:57692"/>
    </ligand>
</feature>
<organism>
    <name type="scientific">Pseudomonas syringae pv. tomato (strain ATCC BAA-871 / DC3000)</name>
    <dbReference type="NCBI Taxonomy" id="223283"/>
    <lineage>
        <taxon>Bacteria</taxon>
        <taxon>Pseudomonadati</taxon>
        <taxon>Pseudomonadota</taxon>
        <taxon>Gammaproteobacteria</taxon>
        <taxon>Pseudomonadales</taxon>
        <taxon>Pseudomonadaceae</taxon>
        <taxon>Pseudomonas</taxon>
    </lineage>
</organism>
<dbReference type="EC" id="1.6.1.1" evidence="2"/>
<dbReference type="EMBL" id="AE016853">
    <property type="protein sequence ID" value="AAO55624.1"/>
    <property type="molecule type" value="Genomic_DNA"/>
</dbReference>
<dbReference type="RefSeq" id="NP_791929.1">
    <property type="nucleotide sequence ID" value="NC_004578.1"/>
</dbReference>
<dbReference type="RefSeq" id="WP_005771330.1">
    <property type="nucleotide sequence ID" value="NC_004578.1"/>
</dbReference>
<dbReference type="SMR" id="Q884I6"/>
<dbReference type="STRING" id="223283.PSPTO_2106"/>
<dbReference type="GeneID" id="1183753"/>
<dbReference type="KEGG" id="pst:PSPTO_2106"/>
<dbReference type="PATRIC" id="fig|223283.9.peg.2137"/>
<dbReference type="eggNOG" id="COG1249">
    <property type="taxonomic scope" value="Bacteria"/>
</dbReference>
<dbReference type="HOGENOM" id="CLU_016755_0_0_6"/>
<dbReference type="OrthoDB" id="9800167at2"/>
<dbReference type="PhylomeDB" id="Q884I6"/>
<dbReference type="Proteomes" id="UP000002515">
    <property type="component" value="Chromosome"/>
</dbReference>
<dbReference type="GO" id="GO:0005829">
    <property type="term" value="C:cytosol"/>
    <property type="evidence" value="ECO:0007669"/>
    <property type="project" value="TreeGrafter"/>
</dbReference>
<dbReference type="GO" id="GO:0004148">
    <property type="term" value="F:dihydrolipoyl dehydrogenase (NADH) activity"/>
    <property type="evidence" value="ECO:0007669"/>
    <property type="project" value="TreeGrafter"/>
</dbReference>
<dbReference type="GO" id="GO:0050660">
    <property type="term" value="F:flavin adenine dinucleotide binding"/>
    <property type="evidence" value="ECO:0007669"/>
    <property type="project" value="TreeGrafter"/>
</dbReference>
<dbReference type="GO" id="GO:0003957">
    <property type="term" value="F:NAD(P)+ transhydrogenase (Si-specific) activity"/>
    <property type="evidence" value="ECO:0007669"/>
    <property type="project" value="UniProtKB-UniRule"/>
</dbReference>
<dbReference type="GO" id="GO:0006103">
    <property type="term" value="P:2-oxoglutarate metabolic process"/>
    <property type="evidence" value="ECO:0007669"/>
    <property type="project" value="TreeGrafter"/>
</dbReference>
<dbReference type="GO" id="GO:0006739">
    <property type="term" value="P:NADP metabolic process"/>
    <property type="evidence" value="ECO:0007669"/>
    <property type="project" value="UniProtKB-UniRule"/>
</dbReference>
<dbReference type="FunFam" id="3.30.390.30:FF:000002">
    <property type="entry name" value="Soluble pyridine nucleotide transhydrogenase"/>
    <property type="match status" value="1"/>
</dbReference>
<dbReference type="FunFam" id="3.50.50.60:FF:000008">
    <property type="entry name" value="Soluble pyridine nucleotide transhydrogenase"/>
    <property type="match status" value="1"/>
</dbReference>
<dbReference type="Gene3D" id="3.30.390.30">
    <property type="match status" value="1"/>
</dbReference>
<dbReference type="Gene3D" id="3.50.50.60">
    <property type="entry name" value="FAD/NAD(P)-binding domain"/>
    <property type="match status" value="2"/>
</dbReference>
<dbReference type="HAMAP" id="MF_00247">
    <property type="entry name" value="SthA"/>
    <property type="match status" value="1"/>
</dbReference>
<dbReference type="InterPro" id="IPR050151">
    <property type="entry name" value="Class-I_Pyr_Nuc-Dis_Oxidored"/>
</dbReference>
<dbReference type="InterPro" id="IPR036188">
    <property type="entry name" value="FAD/NAD-bd_sf"/>
</dbReference>
<dbReference type="InterPro" id="IPR023753">
    <property type="entry name" value="FAD/NAD-binding_dom"/>
</dbReference>
<dbReference type="InterPro" id="IPR016156">
    <property type="entry name" value="FAD/NAD-linked_Rdtase_dimer_sf"/>
</dbReference>
<dbReference type="InterPro" id="IPR001100">
    <property type="entry name" value="Pyr_nuc-diS_OxRdtase"/>
</dbReference>
<dbReference type="InterPro" id="IPR004099">
    <property type="entry name" value="Pyr_nucl-diS_OxRdtase_dimer"/>
</dbReference>
<dbReference type="InterPro" id="IPR022962">
    <property type="entry name" value="STH_gammaproteobact"/>
</dbReference>
<dbReference type="NCBIfam" id="NF003585">
    <property type="entry name" value="PRK05249.1"/>
    <property type="match status" value="1"/>
</dbReference>
<dbReference type="PANTHER" id="PTHR22912">
    <property type="entry name" value="DISULFIDE OXIDOREDUCTASE"/>
    <property type="match status" value="1"/>
</dbReference>
<dbReference type="PANTHER" id="PTHR22912:SF93">
    <property type="entry name" value="SOLUBLE PYRIDINE NUCLEOTIDE TRANSHYDROGENASE"/>
    <property type="match status" value="1"/>
</dbReference>
<dbReference type="Pfam" id="PF07992">
    <property type="entry name" value="Pyr_redox_2"/>
    <property type="match status" value="1"/>
</dbReference>
<dbReference type="Pfam" id="PF02852">
    <property type="entry name" value="Pyr_redox_dim"/>
    <property type="match status" value="1"/>
</dbReference>
<dbReference type="PIRSF" id="PIRSF000350">
    <property type="entry name" value="Mercury_reductase_MerA"/>
    <property type="match status" value="1"/>
</dbReference>
<dbReference type="PRINTS" id="PR00368">
    <property type="entry name" value="FADPNR"/>
</dbReference>
<dbReference type="PRINTS" id="PR00411">
    <property type="entry name" value="PNDRDTASEI"/>
</dbReference>
<dbReference type="SUPFAM" id="SSF51905">
    <property type="entry name" value="FAD/NAD(P)-binding domain"/>
    <property type="match status" value="1"/>
</dbReference>
<dbReference type="SUPFAM" id="SSF55424">
    <property type="entry name" value="FAD/NAD-linked reductases, dimerisation (C-terminal) domain"/>
    <property type="match status" value="1"/>
</dbReference>
<sequence length="464" mass="50705">MAVYNYDVVVLGSGPAGEGAAMNAAKAGRKVAMVDSRREVGGNCTHLGTIPSKALRHSVKQIIQFNTNPMFRAIGEPRWFSFPDVLKNAEMVISKQVASRTSYYARNRVDVFFGTGSFADETSVNVVCANGVVEKLVANQIIIATGSRPYRPADIDFSHKRIYDSDTILSLGHTPRKLIIYGAGVIGCEYASIFSGLGVLVELVDNRDQLLSFLDSEISQALSYHFSNNNVMVRHNEEYERVEGLDNGVVLHLKSGKKIKADALLWCNGRTGNTDKLGLENIGLKANGRGQIEVDEAYRTSVSNVYGAGDVIGWPSLASAAYDQGRSAAGSMVDNGSWRYVNDVPTGIYTIPEISSIGKNEHELTQAKVPYEVGKAFFKGMARAQISGERVGMLKILFHRETLEVLGVHCFGDQASEIVHIGQAIMSQPGEANTIKYFVNTTFNYPTMAEAYRVAAYDGLNRLF</sequence>
<accession>Q884I6</accession>
<evidence type="ECO:0000250" key="1"/>
<evidence type="ECO:0000255" key="2">
    <source>
        <dbReference type="HAMAP-Rule" id="MF_00247"/>
    </source>
</evidence>
<reference key="1">
    <citation type="journal article" date="2003" name="Proc. Natl. Acad. Sci. U.S.A.">
        <title>The complete genome sequence of the Arabidopsis and tomato pathogen Pseudomonas syringae pv. tomato DC3000.</title>
        <authorList>
            <person name="Buell C.R."/>
            <person name="Joardar V."/>
            <person name="Lindeberg M."/>
            <person name="Selengut J."/>
            <person name="Paulsen I.T."/>
            <person name="Gwinn M.L."/>
            <person name="Dodson R.J."/>
            <person name="DeBoy R.T."/>
            <person name="Durkin A.S."/>
            <person name="Kolonay J.F."/>
            <person name="Madupu R."/>
            <person name="Daugherty S.C."/>
            <person name="Brinkac L.M."/>
            <person name="Beanan M.J."/>
            <person name="Haft D.H."/>
            <person name="Nelson W.C."/>
            <person name="Davidsen T.M."/>
            <person name="Zafar N."/>
            <person name="Zhou L."/>
            <person name="Liu J."/>
            <person name="Yuan Q."/>
            <person name="Khouri H.M."/>
            <person name="Fedorova N.B."/>
            <person name="Tran B."/>
            <person name="Russell D."/>
            <person name="Berry K.J."/>
            <person name="Utterback T.R."/>
            <person name="Van Aken S.E."/>
            <person name="Feldblyum T.V."/>
            <person name="D'Ascenzo M."/>
            <person name="Deng W.-L."/>
            <person name="Ramos A.R."/>
            <person name="Alfano J.R."/>
            <person name="Cartinhour S."/>
            <person name="Chatterjee A.K."/>
            <person name="Delaney T.P."/>
            <person name="Lazarowitz S.G."/>
            <person name="Martin G.B."/>
            <person name="Schneider D.J."/>
            <person name="Tang X."/>
            <person name="Bender C.L."/>
            <person name="White O."/>
            <person name="Fraser C.M."/>
            <person name="Collmer A."/>
        </authorList>
    </citation>
    <scope>NUCLEOTIDE SEQUENCE [LARGE SCALE GENOMIC DNA]</scope>
    <source>
        <strain>ATCC BAA-871 / DC3000</strain>
    </source>
</reference>
<proteinExistence type="inferred from homology"/>
<protein>
    <recommendedName>
        <fullName evidence="2">Soluble pyridine nucleotide transhydrogenase</fullName>
        <shortName evidence="2">STH</shortName>
        <ecNumber evidence="2">1.6.1.1</ecNumber>
    </recommendedName>
    <alternativeName>
        <fullName evidence="2">NAD(P)(+) transhydrogenase [B-specific]</fullName>
    </alternativeName>
</protein>
<name>STHA_PSESM</name>
<gene>
    <name evidence="2" type="primary">sthA</name>
    <name type="ordered locus">PSPTO_2106</name>
</gene>
<keyword id="KW-0963">Cytoplasm</keyword>
<keyword id="KW-0274">FAD</keyword>
<keyword id="KW-0285">Flavoprotein</keyword>
<keyword id="KW-0520">NAD</keyword>
<keyword id="KW-0521">NADP</keyword>
<keyword id="KW-0560">Oxidoreductase</keyword>
<keyword id="KW-1185">Reference proteome</keyword>